<gene>
    <name type="primary">NMD2</name>
    <name type="synonym">IFS1</name>
    <name type="synonym">SUA1</name>
    <name type="synonym">UPF2</name>
    <name type="ordered locus">YHR077C</name>
</gene>
<protein>
    <recommendedName>
        <fullName>Nonsense-mediated mRNA decay protein 2</fullName>
    </recommendedName>
    <alternativeName>
        <fullName>Up-frameshift suppressor 2</fullName>
    </alternativeName>
</protein>
<evidence type="ECO:0000256" key="1">
    <source>
        <dbReference type="SAM" id="MobiDB-lite"/>
    </source>
</evidence>
<evidence type="ECO:0000269" key="2">
    <source>
    </source>
</evidence>
<evidence type="ECO:0000305" key="3"/>
<evidence type="ECO:0007829" key="4">
    <source>
        <dbReference type="PDB" id="4LUN"/>
    </source>
</evidence>
<proteinExistence type="evidence at protein level"/>
<name>NMD2_YEAST</name>
<dbReference type="EMBL" id="U14974">
    <property type="protein sequence ID" value="AAA67724.1"/>
    <property type="molecule type" value="Genomic_DNA"/>
</dbReference>
<dbReference type="EMBL" id="U12137">
    <property type="protein sequence ID" value="AAA66521.1"/>
    <property type="molecule type" value="Genomic_DNA"/>
</dbReference>
<dbReference type="EMBL" id="U28158">
    <property type="protein sequence ID" value="AAA74948.1"/>
    <property type="molecule type" value="Genomic_DNA"/>
</dbReference>
<dbReference type="EMBL" id="U10556">
    <property type="protein sequence ID" value="AAB68893.1"/>
    <property type="molecule type" value="Genomic_DNA"/>
</dbReference>
<dbReference type="EMBL" id="BK006934">
    <property type="protein sequence ID" value="DAA06771.1"/>
    <property type="molecule type" value="Genomic_DNA"/>
</dbReference>
<dbReference type="PIR" id="S48244">
    <property type="entry name" value="S48244"/>
</dbReference>
<dbReference type="RefSeq" id="NP_011944.2">
    <property type="nucleotide sequence ID" value="NM_001179207.1"/>
</dbReference>
<dbReference type="PDB" id="4LUN">
    <property type="method" value="X-ray"/>
    <property type="resolution" value="1.64 A"/>
    <property type="chains" value="U=1-310"/>
</dbReference>
<dbReference type="PDBsum" id="4LUN"/>
<dbReference type="SMR" id="P38798"/>
<dbReference type="BioGRID" id="36511">
    <property type="interactions" value="369"/>
</dbReference>
<dbReference type="ComplexPortal" id="CPX-1315">
    <property type="entry name" value="Nonsense-mediated decay complex"/>
</dbReference>
<dbReference type="DIP" id="DIP-2295N"/>
<dbReference type="FunCoup" id="P38798">
    <property type="interactions" value="1186"/>
</dbReference>
<dbReference type="IntAct" id="P38798">
    <property type="interactions" value="19"/>
</dbReference>
<dbReference type="MINT" id="P38798"/>
<dbReference type="STRING" id="4932.YHR077C"/>
<dbReference type="iPTMnet" id="P38798"/>
<dbReference type="PaxDb" id="4932-YHR077C"/>
<dbReference type="PeptideAtlas" id="P38798"/>
<dbReference type="EnsemblFungi" id="YHR077C_mRNA">
    <property type="protein sequence ID" value="YHR077C"/>
    <property type="gene ID" value="YHR077C"/>
</dbReference>
<dbReference type="GeneID" id="856476"/>
<dbReference type="KEGG" id="sce:YHR077C"/>
<dbReference type="AGR" id="SGD:S000001119"/>
<dbReference type="SGD" id="S000001119">
    <property type="gene designation" value="NMD2"/>
</dbReference>
<dbReference type="VEuPathDB" id="FungiDB:YHR077C"/>
<dbReference type="eggNOG" id="KOG2051">
    <property type="taxonomic scope" value="Eukaryota"/>
</dbReference>
<dbReference type="GeneTree" id="ENSGT00530000064318"/>
<dbReference type="HOGENOM" id="CLU_002633_1_0_1"/>
<dbReference type="InParanoid" id="P38798"/>
<dbReference type="OMA" id="DFQHHQI"/>
<dbReference type="OrthoDB" id="27832at2759"/>
<dbReference type="BioCyc" id="YEAST:G3O-31124-MONOMER"/>
<dbReference type="Reactome" id="R-SCE-975957">
    <property type="pathway name" value="Nonsense Mediated Decay (NMD) enhanced by the Exon Junction Complex (EJC)"/>
</dbReference>
<dbReference type="BioGRID-ORCS" id="856476">
    <property type="hits" value="0 hits in 10 CRISPR screens"/>
</dbReference>
<dbReference type="CD-CODE" id="A777E0F8">
    <property type="entry name" value="P-body"/>
</dbReference>
<dbReference type="CD-CODE" id="E03F929F">
    <property type="entry name" value="Stress granule"/>
</dbReference>
<dbReference type="EvolutionaryTrace" id="P38798"/>
<dbReference type="PRO" id="PR:P38798"/>
<dbReference type="Proteomes" id="UP000002311">
    <property type="component" value="Chromosome VIII"/>
</dbReference>
<dbReference type="RNAct" id="P38798">
    <property type="molecule type" value="protein"/>
</dbReference>
<dbReference type="GO" id="GO:0005737">
    <property type="term" value="C:cytoplasm"/>
    <property type="evidence" value="ECO:0000314"/>
    <property type="project" value="SGD"/>
</dbReference>
<dbReference type="GO" id="GO:0035145">
    <property type="term" value="C:exon-exon junction complex"/>
    <property type="evidence" value="ECO:0000318"/>
    <property type="project" value="GO_Central"/>
</dbReference>
<dbReference type="GO" id="GO:0003723">
    <property type="term" value="F:RNA binding"/>
    <property type="evidence" value="ECO:0007669"/>
    <property type="project" value="InterPro"/>
</dbReference>
<dbReference type="GO" id="GO:0071026">
    <property type="term" value="P:cytoplasmic RNA surveillance"/>
    <property type="evidence" value="ECO:0000303"/>
    <property type="project" value="ComplexPortal"/>
</dbReference>
<dbReference type="GO" id="GO:0006310">
    <property type="term" value="P:DNA recombination"/>
    <property type="evidence" value="ECO:0000315"/>
    <property type="project" value="SGD"/>
</dbReference>
<dbReference type="GO" id="GO:0070478">
    <property type="term" value="P:nuclear-transcribed mRNA catabolic process, 3'-5' exonucleolytic nonsense-mediated decay"/>
    <property type="evidence" value="ECO:0000316"/>
    <property type="project" value="SGD"/>
</dbReference>
<dbReference type="GO" id="GO:0000184">
    <property type="term" value="P:nuclear-transcribed mRNA catabolic process, nonsense-mediated decay"/>
    <property type="evidence" value="ECO:0000315"/>
    <property type="project" value="SGD"/>
</dbReference>
<dbReference type="FunFam" id="1.25.40.180:FF:000081">
    <property type="entry name" value="Nonsense-mediated mRNA decay protein 2"/>
    <property type="match status" value="1"/>
</dbReference>
<dbReference type="FunFam" id="1.25.40.180:FF:000094">
    <property type="entry name" value="Nonsense-mediated mRNA decay protein 2"/>
    <property type="match status" value="1"/>
</dbReference>
<dbReference type="FunFam" id="1.25.40.180:FF:000104">
    <property type="entry name" value="Nonsense-mediated mRNA decay protein 2"/>
    <property type="match status" value="1"/>
</dbReference>
<dbReference type="Gene3D" id="1.25.40.180">
    <property type="match status" value="3"/>
</dbReference>
<dbReference type="InterPro" id="IPR016024">
    <property type="entry name" value="ARM-type_fold"/>
</dbReference>
<dbReference type="InterPro" id="IPR003890">
    <property type="entry name" value="MIF4G-like_typ-3"/>
</dbReference>
<dbReference type="InterPro" id="IPR039762">
    <property type="entry name" value="Nmd2/UPF2"/>
</dbReference>
<dbReference type="InterPro" id="IPR007193">
    <property type="entry name" value="Upf2/Nmd2_C"/>
</dbReference>
<dbReference type="PANTHER" id="PTHR12839">
    <property type="entry name" value="NONSENSE-MEDIATED MRNA DECAY PROTEIN 2 UP-FRAMESHIFT SUPPRESSOR 2"/>
    <property type="match status" value="1"/>
</dbReference>
<dbReference type="PANTHER" id="PTHR12839:SF7">
    <property type="entry name" value="REGULATOR OF NONSENSE TRANSCRIPTS 2"/>
    <property type="match status" value="1"/>
</dbReference>
<dbReference type="Pfam" id="PF02854">
    <property type="entry name" value="MIF4G"/>
    <property type="match status" value="3"/>
</dbReference>
<dbReference type="Pfam" id="PF04050">
    <property type="entry name" value="Upf2"/>
    <property type="match status" value="1"/>
</dbReference>
<dbReference type="SMART" id="SM00543">
    <property type="entry name" value="MIF4G"/>
    <property type="match status" value="3"/>
</dbReference>
<dbReference type="SUPFAM" id="SSF48371">
    <property type="entry name" value="ARM repeat"/>
    <property type="match status" value="2"/>
</dbReference>
<comment type="function">
    <text>Involved in nonsense-mediated decay of mRNAs containing premature stop codons. It interacts, via its C-terminus, with NAM7/UPF1. Could be involved in determining the efficiency of translational termination or reinitiation or factors involved in the initial assembly of an initiation- and termination-competent mRNP.</text>
</comment>
<comment type="interaction">
    <interactant intactId="EBI-12071">
        <id>P38798</id>
    </interactant>
    <interactant intactId="EBI-20117">
        <id>P48412</id>
        <label>UPF3</label>
    </interactant>
    <organismsDiffer>false</organismsDiffer>
    <experiments>4</experiments>
</comment>
<comment type="subcellular location">
    <subcellularLocation>
        <location evidence="3">Cytoplasm</location>
    </subcellularLocation>
</comment>
<comment type="miscellaneous">
    <text evidence="2">Present with 1280 molecules/cell in log phase SD medium.</text>
</comment>
<sequence length="1089" mass="126747">MDDGRKKELHDLNTRAWNGEEVFPLKSKKLDSSIKRNTGFIKKLKKGFVKGSESSLLKDLSEASLEKYLSEIIVTVTECLLNVLNKNDDVIAAVEIISGLHQRFNGRFTSPLLGAFLQAFENPSVDIESERDELQRITRVKGNLRVFTELYLVGVFRTLDDIESKDAIPNFLQKKTGRKDPLLFSILREILNYKFKLGFTTTIATAFIKKFAPLFRDDDNSWDDLIYDSKLKGALQSLFKNFIDATFARATELHKKVNKLQREHQKCQIRTGKLRDEYVEEYDKLLPIFIRFKTSAITLGEFFKLEIPELEGASNDDLKETASPMITNQILPPNQRLWENEDTRKFYEILPDISKTVEESQSSKTEKDSNVNSKNINLFFTDLEMADCKDIIDDLSNRYWSSYLDNKATRNRILKFFMETQDWSKLPVYSRFIATNSKYMPEIVSEFINYLDNGFRSQLHSNKINVKNIIFFSEMIKFQLIPSFMIFHKIRTLIMYMQVPNNVEILTVLLEHSGKFLLNKPEYKELMEKMVQLIKDKKNDRQLNMNMKSALENIITLLYPPSVKSLNVTVKTITPEQQFYRILIRSELSSLDFKHIVKLVRKAHWDDVAIQKVLFSLFSKPHKISYQNIPLLTKVLGGLYSYRRDFVIRCIDQVLENIERGLEINDYGQNMHRISNVRYLTEIFNFEMIKSDVLLDTIYHIIRFGHINNQPNPFYLNYSDPPDNYFRIQLVTTILLNINRTPAAFTKKCKLLLRFFEYYTFIKEQPLPKETEFRVSSTFKKYENIFGNTKFERSENLVESASRLESLLKSLNAIKSKDDRVKGSSASIHNGKESAVPIESITEDDEDEDDENDDGVDLLGEDEDAEISTPNTESAPGKHQAKQDESEDEDDEDDDEDDDDDDDDDDDDGEEGDEDDDEDDDDEDDDDEEEEDSDSDLEYGGDLDADRDIEMKRMYEEYERKLKDEEERKAEEELERQFQKMMQESIDARKSEKVVASKIPVISKPVSVQKPLLLKKSEEPSSSKETYEELSKPKKIAFTFLTKSGKKTQSRILQLPTDVKFVSDVLEEEEKLKTERNKIKKIVLKRSFD</sequence>
<organism>
    <name type="scientific">Saccharomyces cerevisiae (strain ATCC 204508 / S288c)</name>
    <name type="common">Baker's yeast</name>
    <dbReference type="NCBI Taxonomy" id="559292"/>
    <lineage>
        <taxon>Eukaryota</taxon>
        <taxon>Fungi</taxon>
        <taxon>Dikarya</taxon>
        <taxon>Ascomycota</taxon>
        <taxon>Saccharomycotina</taxon>
        <taxon>Saccharomycetes</taxon>
        <taxon>Saccharomycetales</taxon>
        <taxon>Saccharomycetaceae</taxon>
        <taxon>Saccharomyces</taxon>
    </lineage>
</organism>
<reference key="1">
    <citation type="journal article" date="1995" name="Genes Dev.">
        <title>Identification of a novel component of the nonsense-mediated mRNA decay pathway by use of an interacting protein screen.</title>
        <authorList>
            <person name="He F."/>
            <person name="Jacobson A."/>
        </authorList>
    </citation>
    <scope>NUCLEOTIDE SEQUENCE [GENOMIC DNA]</scope>
</reference>
<reference key="2">
    <citation type="journal article" date="1995" name="Genes Dev.">
        <title>Identification and characterization of genes that are required for the accelerated degradation of mRNAs containing a premature translational termination codon.</title>
        <authorList>
            <person name="Cui Y."/>
            <person name="Hagan K.W."/>
            <person name="Zhang S."/>
            <person name="Peltz S.W."/>
        </authorList>
    </citation>
    <scope>NUCLEOTIDE SEQUENCE [GENOMIC DNA]</scope>
    <source>
        <strain>PLY136</strain>
    </source>
</reference>
<reference key="3">
    <citation type="journal article" date="1995" name="Proc. Natl. Acad. Sci. U.S.A.">
        <title>A genetic screen identifies cellular factors involved in retroviral -1 frameshifting.</title>
        <authorList>
            <person name="Lee S.I."/>
            <person name="Umen J.G."/>
            <person name="Varmus H.E."/>
        </authorList>
    </citation>
    <scope>NUCLEOTIDE SEQUENCE [GENOMIC DNA]</scope>
</reference>
<reference key="4">
    <citation type="journal article" date="1994" name="Science">
        <title>Complete nucleotide sequence of Saccharomyces cerevisiae chromosome VIII.</title>
        <authorList>
            <person name="Johnston M."/>
            <person name="Andrews S."/>
            <person name="Brinkman R."/>
            <person name="Cooper J."/>
            <person name="Ding H."/>
            <person name="Dover J."/>
            <person name="Du Z."/>
            <person name="Favello A."/>
            <person name="Fulton L."/>
            <person name="Gattung S."/>
            <person name="Geisel C."/>
            <person name="Kirsten J."/>
            <person name="Kucaba T."/>
            <person name="Hillier L.W."/>
            <person name="Jier M."/>
            <person name="Johnston L."/>
            <person name="Langston Y."/>
            <person name="Latreille P."/>
            <person name="Louis E.J."/>
            <person name="Macri C."/>
            <person name="Mardis E."/>
            <person name="Menezes S."/>
            <person name="Mouser L."/>
            <person name="Nhan M."/>
            <person name="Rifkin L."/>
            <person name="Riles L."/>
            <person name="St Peter H."/>
            <person name="Trevaskis E."/>
            <person name="Vaughan K."/>
            <person name="Vignati D."/>
            <person name="Wilcox L."/>
            <person name="Wohldman P."/>
            <person name="Waterston R."/>
            <person name="Wilson R."/>
            <person name="Vaudin M."/>
        </authorList>
    </citation>
    <scope>NUCLEOTIDE SEQUENCE [LARGE SCALE GENOMIC DNA]</scope>
    <source>
        <strain>ATCC 204508 / S288c</strain>
    </source>
</reference>
<reference key="5">
    <citation type="journal article" date="2014" name="G3 (Bethesda)">
        <title>The reference genome sequence of Saccharomyces cerevisiae: Then and now.</title>
        <authorList>
            <person name="Engel S.R."/>
            <person name="Dietrich F.S."/>
            <person name="Fisk D.G."/>
            <person name="Binkley G."/>
            <person name="Balakrishnan R."/>
            <person name="Costanzo M.C."/>
            <person name="Dwight S.S."/>
            <person name="Hitz B.C."/>
            <person name="Karra K."/>
            <person name="Nash R.S."/>
            <person name="Weng S."/>
            <person name="Wong E.D."/>
            <person name="Lloyd P."/>
            <person name="Skrzypek M.S."/>
            <person name="Miyasato S.R."/>
            <person name="Simison M."/>
            <person name="Cherry J.M."/>
        </authorList>
    </citation>
    <scope>GENOME REANNOTATION</scope>
    <source>
        <strain>ATCC 204508 / S288c</strain>
    </source>
</reference>
<reference key="6">
    <citation type="journal article" date="2003" name="Nature">
        <title>Global analysis of protein expression in yeast.</title>
        <authorList>
            <person name="Ghaemmaghami S."/>
            <person name="Huh W.-K."/>
            <person name="Bower K."/>
            <person name="Howson R.W."/>
            <person name="Belle A."/>
            <person name="Dephoure N."/>
            <person name="O'Shea E.K."/>
            <person name="Weissman J.S."/>
        </authorList>
    </citation>
    <scope>LEVEL OF PROTEIN EXPRESSION [LARGE SCALE ANALYSIS]</scope>
</reference>
<accession>P38798</accession>
<accession>D3DL27</accession>
<keyword id="KW-0002">3D-structure</keyword>
<keyword id="KW-0963">Cytoplasm</keyword>
<keyword id="KW-1185">Reference proteome</keyword>
<feature type="chain" id="PRO_0000096873" description="Nonsense-mediated mRNA decay protein 2">
    <location>
        <begin position="1"/>
        <end position="1089"/>
    </location>
</feature>
<feature type="region of interest" description="Disordered" evidence="1">
    <location>
        <begin position="819"/>
        <end position="951"/>
    </location>
</feature>
<feature type="compositionally biased region" description="Acidic residues" evidence="1">
    <location>
        <begin position="841"/>
        <end position="866"/>
    </location>
</feature>
<feature type="compositionally biased region" description="Acidic residues" evidence="1">
    <location>
        <begin position="885"/>
        <end position="943"/>
    </location>
</feature>
<feature type="sequence conflict" description="In Ref. 3 and 4." evidence="3" ref="3 4">
    <original>D</original>
    <variation>YQQ</variation>
    <location>
        <position position="2"/>
    </location>
</feature>
<feature type="helix" evidence="4">
    <location>
        <begin position="3"/>
        <end position="17"/>
    </location>
</feature>
<feature type="helix" evidence="4">
    <location>
        <begin position="34"/>
        <end position="44"/>
    </location>
</feature>
<feature type="helix" evidence="4">
    <location>
        <begin position="52"/>
        <end position="60"/>
    </location>
</feature>
<feature type="helix" evidence="4">
    <location>
        <begin position="66"/>
        <end position="68"/>
    </location>
</feature>
<feature type="helix" evidence="4">
    <location>
        <begin position="69"/>
        <end position="81"/>
    </location>
</feature>
<feature type="helix" evidence="4">
    <location>
        <begin position="87"/>
        <end position="104"/>
    </location>
</feature>
<feature type="helix" evidence="4">
    <location>
        <begin position="106"/>
        <end position="116"/>
    </location>
</feature>
<feature type="helix" evidence="4">
    <location>
        <begin position="117"/>
        <end position="120"/>
    </location>
</feature>
<feature type="helix" evidence="4">
    <location>
        <begin position="130"/>
        <end position="152"/>
    </location>
</feature>
<feature type="helix" evidence="4">
    <location>
        <begin position="159"/>
        <end position="161"/>
    </location>
</feature>
<feature type="helix" evidence="4">
    <location>
        <begin position="170"/>
        <end position="172"/>
    </location>
</feature>
<feature type="helix" evidence="4">
    <location>
        <begin position="182"/>
        <end position="190"/>
    </location>
</feature>
<feature type="helix" evidence="4">
    <location>
        <begin position="195"/>
        <end position="197"/>
    </location>
</feature>
<feature type="helix" evidence="4">
    <location>
        <begin position="201"/>
        <end position="210"/>
    </location>
</feature>
<feature type="helix" evidence="4">
    <location>
        <begin position="212"/>
        <end position="214"/>
    </location>
</feature>
<feature type="helix" evidence="4">
    <location>
        <begin position="223"/>
        <end position="225"/>
    </location>
</feature>
<feature type="helix" evidence="4">
    <location>
        <begin position="231"/>
        <end position="271"/>
    </location>
</feature>
<feature type="helix" evidence="4">
    <location>
        <begin position="277"/>
        <end position="303"/>
    </location>
</feature>